<dbReference type="EC" id="2.1.2.10" evidence="1"/>
<dbReference type="EMBL" id="CP000050">
    <property type="protein sequence ID" value="AAY48301.1"/>
    <property type="molecule type" value="Genomic_DNA"/>
</dbReference>
<dbReference type="RefSeq" id="WP_011038002.1">
    <property type="nucleotide sequence ID" value="NZ_CP155948.1"/>
</dbReference>
<dbReference type="SMR" id="Q4UXC2"/>
<dbReference type="KEGG" id="xcb:XC_1232"/>
<dbReference type="HOGENOM" id="CLU_007884_10_2_6"/>
<dbReference type="Proteomes" id="UP000000420">
    <property type="component" value="Chromosome"/>
</dbReference>
<dbReference type="GO" id="GO:0005829">
    <property type="term" value="C:cytosol"/>
    <property type="evidence" value="ECO:0007669"/>
    <property type="project" value="TreeGrafter"/>
</dbReference>
<dbReference type="GO" id="GO:0005960">
    <property type="term" value="C:glycine cleavage complex"/>
    <property type="evidence" value="ECO:0007669"/>
    <property type="project" value="InterPro"/>
</dbReference>
<dbReference type="GO" id="GO:0004047">
    <property type="term" value="F:aminomethyltransferase activity"/>
    <property type="evidence" value="ECO:0007669"/>
    <property type="project" value="UniProtKB-UniRule"/>
</dbReference>
<dbReference type="GO" id="GO:0008483">
    <property type="term" value="F:transaminase activity"/>
    <property type="evidence" value="ECO:0007669"/>
    <property type="project" value="UniProtKB-KW"/>
</dbReference>
<dbReference type="GO" id="GO:0019464">
    <property type="term" value="P:glycine decarboxylation via glycine cleavage system"/>
    <property type="evidence" value="ECO:0007669"/>
    <property type="project" value="UniProtKB-UniRule"/>
</dbReference>
<dbReference type="FunFam" id="2.40.30.110:FF:000001">
    <property type="entry name" value="Aminomethyltransferase"/>
    <property type="match status" value="1"/>
</dbReference>
<dbReference type="FunFam" id="3.30.70.1400:FF:000001">
    <property type="entry name" value="Aminomethyltransferase"/>
    <property type="match status" value="1"/>
</dbReference>
<dbReference type="FunFam" id="4.10.1250.10:FF:000001">
    <property type="entry name" value="Aminomethyltransferase"/>
    <property type="match status" value="1"/>
</dbReference>
<dbReference type="Gene3D" id="2.40.30.110">
    <property type="entry name" value="Aminomethyltransferase beta-barrel domains"/>
    <property type="match status" value="1"/>
</dbReference>
<dbReference type="Gene3D" id="3.30.70.1400">
    <property type="entry name" value="Aminomethyltransferase beta-barrel domains"/>
    <property type="match status" value="1"/>
</dbReference>
<dbReference type="Gene3D" id="4.10.1250.10">
    <property type="entry name" value="Aminomethyltransferase fragment"/>
    <property type="match status" value="1"/>
</dbReference>
<dbReference type="Gene3D" id="3.30.1360.120">
    <property type="entry name" value="Probable tRNA modification gtpase trme, domain 1"/>
    <property type="match status" value="1"/>
</dbReference>
<dbReference type="HAMAP" id="MF_00259">
    <property type="entry name" value="GcvT"/>
    <property type="match status" value="1"/>
</dbReference>
<dbReference type="InterPro" id="IPR006223">
    <property type="entry name" value="GCS_T"/>
</dbReference>
<dbReference type="InterPro" id="IPR022903">
    <property type="entry name" value="GCS_T_bac"/>
</dbReference>
<dbReference type="InterPro" id="IPR013977">
    <property type="entry name" value="GCST_C"/>
</dbReference>
<dbReference type="InterPro" id="IPR006222">
    <property type="entry name" value="GCV_T_N"/>
</dbReference>
<dbReference type="InterPro" id="IPR028896">
    <property type="entry name" value="GcvT/YgfZ/DmdA"/>
</dbReference>
<dbReference type="InterPro" id="IPR029043">
    <property type="entry name" value="GcvT/YgfZ_C"/>
</dbReference>
<dbReference type="InterPro" id="IPR027266">
    <property type="entry name" value="TrmE/GcvT_dom1"/>
</dbReference>
<dbReference type="NCBIfam" id="TIGR00528">
    <property type="entry name" value="gcvT"/>
    <property type="match status" value="1"/>
</dbReference>
<dbReference type="NCBIfam" id="NF001567">
    <property type="entry name" value="PRK00389.1"/>
    <property type="match status" value="1"/>
</dbReference>
<dbReference type="PANTHER" id="PTHR43757">
    <property type="entry name" value="AMINOMETHYLTRANSFERASE"/>
    <property type="match status" value="1"/>
</dbReference>
<dbReference type="PANTHER" id="PTHR43757:SF2">
    <property type="entry name" value="AMINOMETHYLTRANSFERASE, MITOCHONDRIAL"/>
    <property type="match status" value="1"/>
</dbReference>
<dbReference type="Pfam" id="PF01571">
    <property type="entry name" value="GCV_T"/>
    <property type="match status" value="1"/>
</dbReference>
<dbReference type="Pfam" id="PF08669">
    <property type="entry name" value="GCV_T_C"/>
    <property type="match status" value="1"/>
</dbReference>
<dbReference type="PIRSF" id="PIRSF006487">
    <property type="entry name" value="GcvT"/>
    <property type="match status" value="1"/>
</dbReference>
<dbReference type="SUPFAM" id="SSF101790">
    <property type="entry name" value="Aminomethyltransferase beta-barrel domain"/>
    <property type="match status" value="1"/>
</dbReference>
<dbReference type="SUPFAM" id="SSF103025">
    <property type="entry name" value="Folate-binding domain"/>
    <property type="match status" value="1"/>
</dbReference>
<keyword id="KW-0032">Aminotransferase</keyword>
<keyword id="KW-0808">Transferase</keyword>
<evidence type="ECO:0000255" key="1">
    <source>
        <dbReference type="HAMAP-Rule" id="MF_00259"/>
    </source>
</evidence>
<protein>
    <recommendedName>
        <fullName evidence="1">Aminomethyltransferase</fullName>
        <ecNumber evidence="1">2.1.2.10</ecNumber>
    </recommendedName>
    <alternativeName>
        <fullName evidence="1">Glycine cleavage system T protein</fullName>
    </alternativeName>
</protein>
<feature type="chain" id="PRO_1000047727" description="Aminomethyltransferase">
    <location>
        <begin position="1"/>
        <end position="369"/>
    </location>
</feature>
<accession>Q4UXC2</accession>
<sequence length="369" mass="40281">MTQKTILNDTHRALGAKMVDFGGWDMPIHYGSQIDEHHQVRRDAGMFDVSHMTVVDLHGVRVREFLRYLLANSVDKLKVSGKALYTCMLNPQGGVIDDLIVYFMQEEFFRLVVNAATRDKDLQWIGEQAARFEVRVKERADFAMIAVQGPNARSKVIDLLDPADASAASKLGRFAALQTRTRDGVALFLARTGYTGEDGFEIVLPQADAVAFWNALLAHGVAPAGLGARDTLRLEAGMNLYGQDMDDNVTPYEAALAWTITLDEGRDFIGRSVLESQKAQGAPRQMIGVVMDEKGVLRHGQKVLSAGGEGEILSGTFSPTLGKAIAFARVPAGSIDDLRVDIRGKQVPLRAVKFPFVRDGQAQPGVLGA</sequence>
<organism>
    <name type="scientific">Xanthomonas campestris pv. campestris (strain 8004)</name>
    <dbReference type="NCBI Taxonomy" id="314565"/>
    <lineage>
        <taxon>Bacteria</taxon>
        <taxon>Pseudomonadati</taxon>
        <taxon>Pseudomonadota</taxon>
        <taxon>Gammaproteobacteria</taxon>
        <taxon>Lysobacterales</taxon>
        <taxon>Lysobacteraceae</taxon>
        <taxon>Xanthomonas</taxon>
    </lineage>
</organism>
<comment type="function">
    <text evidence="1">The glycine cleavage system catalyzes the degradation of glycine.</text>
</comment>
<comment type="catalytic activity">
    <reaction evidence="1">
        <text>N(6)-[(R)-S(8)-aminomethyldihydrolipoyl]-L-lysyl-[protein] + (6S)-5,6,7,8-tetrahydrofolate = N(6)-[(R)-dihydrolipoyl]-L-lysyl-[protein] + (6R)-5,10-methylene-5,6,7,8-tetrahydrofolate + NH4(+)</text>
        <dbReference type="Rhea" id="RHEA:16945"/>
        <dbReference type="Rhea" id="RHEA-COMP:10475"/>
        <dbReference type="Rhea" id="RHEA-COMP:10492"/>
        <dbReference type="ChEBI" id="CHEBI:15636"/>
        <dbReference type="ChEBI" id="CHEBI:28938"/>
        <dbReference type="ChEBI" id="CHEBI:57453"/>
        <dbReference type="ChEBI" id="CHEBI:83100"/>
        <dbReference type="ChEBI" id="CHEBI:83143"/>
        <dbReference type="EC" id="2.1.2.10"/>
    </reaction>
</comment>
<comment type="subunit">
    <text evidence="1">The glycine cleavage system is composed of four proteins: P, T, L and H.</text>
</comment>
<comment type="similarity">
    <text evidence="1">Belongs to the GcvT family.</text>
</comment>
<name>GCST_XANC8</name>
<proteinExistence type="inferred from homology"/>
<gene>
    <name evidence="1" type="primary">gcvT</name>
    <name type="ordered locus">XC_1232</name>
</gene>
<reference key="1">
    <citation type="journal article" date="2005" name="Genome Res.">
        <title>Comparative and functional genomic analyses of the pathogenicity of phytopathogen Xanthomonas campestris pv. campestris.</title>
        <authorList>
            <person name="Qian W."/>
            <person name="Jia Y."/>
            <person name="Ren S.-X."/>
            <person name="He Y.-Q."/>
            <person name="Feng J.-X."/>
            <person name="Lu L.-F."/>
            <person name="Sun Q."/>
            <person name="Ying G."/>
            <person name="Tang D.-J."/>
            <person name="Tang H."/>
            <person name="Wu W."/>
            <person name="Hao P."/>
            <person name="Wang L."/>
            <person name="Jiang B.-L."/>
            <person name="Zeng S."/>
            <person name="Gu W.-Y."/>
            <person name="Lu G."/>
            <person name="Rong L."/>
            <person name="Tian Y."/>
            <person name="Yao Z."/>
            <person name="Fu G."/>
            <person name="Chen B."/>
            <person name="Fang R."/>
            <person name="Qiang B."/>
            <person name="Chen Z."/>
            <person name="Zhao G.-P."/>
            <person name="Tang J.-L."/>
            <person name="He C."/>
        </authorList>
    </citation>
    <scope>NUCLEOTIDE SEQUENCE [LARGE SCALE GENOMIC DNA]</scope>
    <source>
        <strain>8004</strain>
    </source>
</reference>